<dbReference type="EMBL" id="U32672">
    <property type="protein sequence ID" value="AAC50504.1"/>
    <property type="status" value="ALT_FRAME"/>
    <property type="molecule type" value="Genomic_DNA"/>
</dbReference>
<dbReference type="EMBL" id="AB015745">
    <property type="protein sequence ID" value="BAA31159.1"/>
    <property type="molecule type" value="mRNA"/>
</dbReference>
<dbReference type="EMBL" id="AB048946">
    <property type="protein sequence ID" value="BAB83030.1"/>
    <property type="molecule type" value="Genomic_DNA"/>
</dbReference>
<dbReference type="EMBL" id="AL356865">
    <property type="status" value="NOT_ANNOTATED_CDS"/>
    <property type="molecule type" value="Genomic_DNA"/>
</dbReference>
<dbReference type="EMBL" id="BC095539">
    <property type="protein sequence ID" value="AAH95539.1"/>
    <property type="molecule type" value="mRNA"/>
</dbReference>
<dbReference type="EMBL" id="BC101490">
    <property type="protein sequence ID" value="AAI01491.1"/>
    <property type="molecule type" value="mRNA"/>
</dbReference>
<dbReference type="EMBL" id="BC101492">
    <property type="protein sequence ID" value="AAI01493.1"/>
    <property type="molecule type" value="mRNA"/>
</dbReference>
<dbReference type="CCDS" id="CCDS7606.1"/>
<dbReference type="RefSeq" id="NP_004239.2">
    <property type="nucleotide sequence ID" value="NM_004248.3"/>
</dbReference>
<dbReference type="PDB" id="8ZPS">
    <property type="method" value="EM"/>
    <property type="resolution" value="2.97 A"/>
    <property type="chains" value="R=1-370"/>
</dbReference>
<dbReference type="PDB" id="8ZPT">
    <property type="method" value="EM"/>
    <property type="resolution" value="2.96 A"/>
    <property type="chains" value="R=1-370"/>
</dbReference>
<dbReference type="PDB" id="9K26">
    <property type="method" value="EM"/>
    <property type="resolution" value="3.00 A"/>
    <property type="chains" value="A=1-370"/>
</dbReference>
<dbReference type="PDB" id="9K27">
    <property type="method" value="EM"/>
    <property type="resolution" value="2.68 A"/>
    <property type="chains" value="A=1-370"/>
</dbReference>
<dbReference type="PDBsum" id="8ZPS"/>
<dbReference type="PDBsum" id="8ZPT"/>
<dbReference type="PDBsum" id="9K26"/>
<dbReference type="PDBsum" id="9K27"/>
<dbReference type="EMDB" id="EMD-60353"/>
<dbReference type="EMDB" id="EMD-60354"/>
<dbReference type="EMDB" id="EMD-61991"/>
<dbReference type="EMDB" id="EMD-61992"/>
<dbReference type="SMR" id="P49683"/>
<dbReference type="BioGRID" id="109095">
    <property type="interactions" value="4"/>
</dbReference>
<dbReference type="FunCoup" id="P49683">
    <property type="interactions" value="625"/>
</dbReference>
<dbReference type="IntAct" id="P49683">
    <property type="interactions" value="3"/>
</dbReference>
<dbReference type="MINT" id="P49683"/>
<dbReference type="STRING" id="9606.ENSP00000239032"/>
<dbReference type="BindingDB" id="P49683"/>
<dbReference type="ChEMBL" id="CHEMBL1681611"/>
<dbReference type="GuidetoPHARMACOLOGY" id="337"/>
<dbReference type="GlyCosmos" id="P49683">
    <property type="glycosylation" value="2 sites, No reported glycans"/>
</dbReference>
<dbReference type="GlyGen" id="P49683">
    <property type="glycosylation" value="2 sites"/>
</dbReference>
<dbReference type="iPTMnet" id="P49683"/>
<dbReference type="PhosphoSitePlus" id="P49683"/>
<dbReference type="BioMuta" id="PRLHR"/>
<dbReference type="DMDM" id="311033415"/>
<dbReference type="jPOST" id="P49683"/>
<dbReference type="PaxDb" id="9606-ENSP00000239032"/>
<dbReference type="Antibodypedia" id="18777">
    <property type="antibodies" value="286 antibodies from 29 providers"/>
</dbReference>
<dbReference type="DNASU" id="2834"/>
<dbReference type="Ensembl" id="ENST00000239032.4">
    <property type="protein sequence ID" value="ENSP00000239032.2"/>
    <property type="gene ID" value="ENSG00000119973.6"/>
</dbReference>
<dbReference type="Ensembl" id="ENST00000636925.1">
    <property type="protein sequence ID" value="ENSP00000490073.1"/>
    <property type="gene ID" value="ENSG00000119973.6"/>
</dbReference>
<dbReference type="GeneID" id="2834"/>
<dbReference type="KEGG" id="hsa:2834"/>
<dbReference type="MANE-Select" id="ENST00000239032.4">
    <property type="protein sequence ID" value="ENSP00000239032.2"/>
    <property type="RefSeq nucleotide sequence ID" value="NM_004248.3"/>
    <property type="RefSeq protein sequence ID" value="NP_004239.2"/>
</dbReference>
<dbReference type="UCSC" id="uc001ldp.2">
    <property type="organism name" value="human"/>
</dbReference>
<dbReference type="AGR" id="HGNC:4464"/>
<dbReference type="CTD" id="2834"/>
<dbReference type="DisGeNET" id="2834"/>
<dbReference type="GeneCards" id="PRLHR"/>
<dbReference type="HGNC" id="HGNC:4464">
    <property type="gene designation" value="PRLHR"/>
</dbReference>
<dbReference type="HPA" id="ENSG00000119973">
    <property type="expression patterns" value="Tissue enhanced (adrenal gland, pituitary gland, smooth muscle)"/>
</dbReference>
<dbReference type="MIM" id="600895">
    <property type="type" value="gene"/>
</dbReference>
<dbReference type="neXtProt" id="NX_P49683"/>
<dbReference type="OpenTargets" id="ENSG00000119973"/>
<dbReference type="PharmGKB" id="PA28847"/>
<dbReference type="VEuPathDB" id="HostDB:ENSG00000119973"/>
<dbReference type="eggNOG" id="KOG3656">
    <property type="taxonomic scope" value="Eukaryota"/>
</dbReference>
<dbReference type="GeneTree" id="ENSGT00940000162008"/>
<dbReference type="HOGENOM" id="CLU_009579_6_1_1"/>
<dbReference type="InParanoid" id="P49683"/>
<dbReference type="OMA" id="WPRKIVP"/>
<dbReference type="OrthoDB" id="5975336at2759"/>
<dbReference type="PAN-GO" id="P49683">
    <property type="GO annotations" value="5 GO annotations based on evolutionary models"/>
</dbReference>
<dbReference type="PhylomeDB" id="P49683"/>
<dbReference type="TreeFam" id="TF315303"/>
<dbReference type="PathwayCommons" id="P49683"/>
<dbReference type="Reactome" id="R-HSA-375276">
    <property type="pathway name" value="Peptide ligand-binding receptors"/>
</dbReference>
<dbReference type="SignaLink" id="P49683"/>
<dbReference type="SIGNOR" id="P49683"/>
<dbReference type="BioGRID-ORCS" id="2834">
    <property type="hits" value="10 hits in 1135 CRISPR screens"/>
</dbReference>
<dbReference type="GeneWiki" id="Prolactin-releasing_peptide_receptor"/>
<dbReference type="GenomeRNAi" id="2834"/>
<dbReference type="Pharos" id="P49683">
    <property type="development level" value="Tchem"/>
</dbReference>
<dbReference type="PRO" id="PR:P49683"/>
<dbReference type="Proteomes" id="UP000005640">
    <property type="component" value="Chromosome 10"/>
</dbReference>
<dbReference type="RNAct" id="P49683">
    <property type="molecule type" value="protein"/>
</dbReference>
<dbReference type="Bgee" id="ENSG00000119973">
    <property type="expression patterns" value="Expressed in pituitary gland and 42 other cell types or tissues"/>
</dbReference>
<dbReference type="GO" id="GO:0005929">
    <property type="term" value="C:cilium"/>
    <property type="evidence" value="ECO:0000314"/>
    <property type="project" value="MGI"/>
</dbReference>
<dbReference type="GO" id="GO:0043005">
    <property type="term" value="C:neuron projection"/>
    <property type="evidence" value="ECO:0000318"/>
    <property type="project" value="GO_Central"/>
</dbReference>
<dbReference type="GO" id="GO:0005886">
    <property type="term" value="C:plasma membrane"/>
    <property type="evidence" value="ECO:0000318"/>
    <property type="project" value="GO_Central"/>
</dbReference>
<dbReference type="GO" id="GO:0004930">
    <property type="term" value="F:G protein-coupled receptor activity"/>
    <property type="evidence" value="ECO:0000304"/>
    <property type="project" value="ProtInc"/>
</dbReference>
<dbReference type="GO" id="GO:0042923">
    <property type="term" value="F:neuropeptide binding"/>
    <property type="evidence" value="ECO:0000318"/>
    <property type="project" value="GO_Central"/>
</dbReference>
<dbReference type="GO" id="GO:0008188">
    <property type="term" value="F:neuropeptide receptor activity"/>
    <property type="evidence" value="ECO:0000318"/>
    <property type="project" value="GO_Central"/>
</dbReference>
<dbReference type="GO" id="GO:0004983">
    <property type="term" value="F:neuropeptide Y receptor activity"/>
    <property type="evidence" value="ECO:0007669"/>
    <property type="project" value="InterPro"/>
</dbReference>
<dbReference type="GO" id="GO:0007631">
    <property type="term" value="P:feeding behavior"/>
    <property type="evidence" value="ECO:0007669"/>
    <property type="project" value="Ensembl"/>
</dbReference>
<dbReference type="GO" id="GO:0007565">
    <property type="term" value="P:female pregnancy"/>
    <property type="evidence" value="ECO:0000304"/>
    <property type="project" value="ProtInc"/>
</dbReference>
<dbReference type="GO" id="GO:0007186">
    <property type="term" value="P:G protein-coupled receptor signaling pathway"/>
    <property type="evidence" value="ECO:0000318"/>
    <property type="project" value="GO_Central"/>
</dbReference>
<dbReference type="GO" id="GO:0042445">
    <property type="term" value="P:hormone metabolic process"/>
    <property type="evidence" value="ECO:0007669"/>
    <property type="project" value="Ensembl"/>
</dbReference>
<dbReference type="CDD" id="cd15394">
    <property type="entry name" value="7tmA_PrRP_R"/>
    <property type="match status" value="1"/>
</dbReference>
<dbReference type="FunFam" id="1.20.1070.10:FF:000119">
    <property type="entry name" value="Prolactin releasing hormone receptor"/>
    <property type="match status" value="1"/>
</dbReference>
<dbReference type="Gene3D" id="1.20.1070.10">
    <property type="entry name" value="Rhodopsin 7-helix transmembrane proteins"/>
    <property type="match status" value="1"/>
</dbReference>
<dbReference type="InterPro" id="IPR000276">
    <property type="entry name" value="GPCR_Rhodpsn"/>
</dbReference>
<dbReference type="InterPro" id="IPR017452">
    <property type="entry name" value="GPCR_Rhodpsn_7TM"/>
</dbReference>
<dbReference type="InterPro" id="IPR001402">
    <property type="entry name" value="Prolrel_pep_rcpt"/>
</dbReference>
<dbReference type="PANTHER" id="PTHR24235">
    <property type="entry name" value="NEUROPEPTIDE Y RECEPTOR"/>
    <property type="match status" value="1"/>
</dbReference>
<dbReference type="PANTHER" id="PTHR24235:SF11">
    <property type="entry name" value="PROLACTIN-RELEASING PEPTIDE RECEPTOR"/>
    <property type="match status" value="1"/>
</dbReference>
<dbReference type="Pfam" id="PF00001">
    <property type="entry name" value="7tm_1"/>
    <property type="match status" value="1"/>
</dbReference>
<dbReference type="PRINTS" id="PR00237">
    <property type="entry name" value="GPCRRHODOPSN"/>
</dbReference>
<dbReference type="PRINTS" id="PR01018">
    <property type="entry name" value="PRPRECEPTOR"/>
</dbReference>
<dbReference type="SMART" id="SM01381">
    <property type="entry name" value="7TM_GPCR_Srsx"/>
    <property type="match status" value="1"/>
</dbReference>
<dbReference type="SUPFAM" id="SSF81321">
    <property type="entry name" value="Family A G protein-coupled receptor-like"/>
    <property type="match status" value="1"/>
</dbReference>
<dbReference type="PROSITE" id="PS00237">
    <property type="entry name" value="G_PROTEIN_RECEP_F1_1"/>
    <property type="match status" value="1"/>
</dbReference>
<dbReference type="PROSITE" id="PS50262">
    <property type="entry name" value="G_PROTEIN_RECEP_F1_2"/>
    <property type="match status" value="1"/>
</dbReference>
<proteinExistence type="evidence at protein level"/>
<organism>
    <name type="scientific">Homo sapiens</name>
    <name type="common">Human</name>
    <dbReference type="NCBI Taxonomy" id="9606"/>
    <lineage>
        <taxon>Eukaryota</taxon>
        <taxon>Metazoa</taxon>
        <taxon>Chordata</taxon>
        <taxon>Craniata</taxon>
        <taxon>Vertebrata</taxon>
        <taxon>Euteleostomi</taxon>
        <taxon>Mammalia</taxon>
        <taxon>Eutheria</taxon>
        <taxon>Euarchontoglires</taxon>
        <taxon>Primates</taxon>
        <taxon>Haplorrhini</taxon>
        <taxon>Catarrhini</taxon>
        <taxon>Hominidae</taxon>
        <taxon>Homo</taxon>
    </lineage>
</organism>
<keyword id="KW-0002">3D-structure</keyword>
<keyword id="KW-1003">Cell membrane</keyword>
<keyword id="KW-1015">Disulfide bond</keyword>
<keyword id="KW-0297">G-protein coupled receptor</keyword>
<keyword id="KW-0325">Glycoprotein</keyword>
<keyword id="KW-0472">Membrane</keyword>
<keyword id="KW-0675">Receptor</keyword>
<keyword id="KW-1185">Reference proteome</keyword>
<keyword id="KW-0807">Transducer</keyword>
<keyword id="KW-0812">Transmembrane</keyword>
<keyword id="KW-1133">Transmembrane helix</keyword>
<reference key="1">
    <citation type="journal article" date="1995" name="Genomics">
        <title>Cloning and chromosomal mapping of three novel genes, GPR9, GPR10, and GPR14, encoding receptors related to interleukin 8, neuropeptide Y, and somatostatin receptors.</title>
        <authorList>
            <person name="Marchese A."/>
            <person name="Heiber M."/>
            <person name="Nguyen T."/>
            <person name="Heng H.H.Q."/>
            <person name="Saldivia V.R."/>
            <person name="Cheng R."/>
            <person name="Murphy P.M."/>
            <person name="Tsui L.-C."/>
            <person name="Shi X."/>
            <person name="Gregor P."/>
            <person name="George S.R."/>
            <person name="O'Dowd B.F."/>
            <person name="Docherty J.M."/>
        </authorList>
    </citation>
    <scope>NUCLEOTIDE SEQUENCE [GENOMIC DNA]</scope>
    <scope>VARIANT VAL-283</scope>
</reference>
<reference key="2">
    <citation type="journal article" date="1998" name="Nature">
        <title>A prolactin-releasing peptide in the brain.</title>
        <authorList>
            <person name="Hinuma S."/>
            <person name="Habata Y."/>
            <person name="Fujii R."/>
            <person name="Kawamata Y."/>
            <person name="Hosoya M."/>
            <person name="Fukusumi S."/>
            <person name="Kitada C."/>
            <person name="Masuo Y."/>
            <person name="Asano T."/>
            <person name="Matsumoto H."/>
            <person name="Sekiguchi M."/>
            <person name="Kurokawa T."/>
            <person name="Nishimura O."/>
            <person name="Onda H."/>
            <person name="Fujino M."/>
        </authorList>
    </citation>
    <scope>NUCLEOTIDE SEQUENCE [MRNA]</scope>
    <scope>VARIANT VAL-283</scope>
</reference>
<reference key="3">
    <citation type="journal article" date="2002" name="Mol. Endocrinol.">
        <title>Transcriptional regulation of the human PRL-releasing peptide (PrRP) receptor gene by a dopamine 2 receptor agonist: cloning and characterization of the human PrRP receptor gene and its promoter region.</title>
        <authorList>
            <person name="Ozawa A."/>
            <person name="Yamada M."/>
            <person name="Satoh T."/>
            <person name="Monden T."/>
            <person name="Hashimoto K."/>
            <person name="Kohga H."/>
            <person name="Hashiba Y."/>
            <person name="Sasaki T."/>
            <person name="Mori M."/>
        </authorList>
    </citation>
    <scope>NUCLEOTIDE SEQUENCE [GENOMIC DNA]</scope>
    <scope>TISSUE SPECIFICITY</scope>
    <scope>INDUCTION</scope>
    <scope>VARIANT VAL-283</scope>
</reference>
<reference key="4">
    <citation type="journal article" date="2004" name="Nature">
        <title>The DNA sequence and comparative analysis of human chromosome 10.</title>
        <authorList>
            <person name="Deloukas P."/>
            <person name="Earthrowl M.E."/>
            <person name="Grafham D.V."/>
            <person name="Rubenfield M."/>
            <person name="French L."/>
            <person name="Steward C.A."/>
            <person name="Sims S.K."/>
            <person name="Jones M.C."/>
            <person name="Searle S."/>
            <person name="Scott C."/>
            <person name="Howe K."/>
            <person name="Hunt S.E."/>
            <person name="Andrews T.D."/>
            <person name="Gilbert J.G.R."/>
            <person name="Swarbreck D."/>
            <person name="Ashurst J.L."/>
            <person name="Taylor A."/>
            <person name="Battles J."/>
            <person name="Bird C.P."/>
            <person name="Ainscough R."/>
            <person name="Almeida J.P."/>
            <person name="Ashwell R.I.S."/>
            <person name="Ambrose K.D."/>
            <person name="Babbage A.K."/>
            <person name="Bagguley C.L."/>
            <person name="Bailey J."/>
            <person name="Banerjee R."/>
            <person name="Bates K."/>
            <person name="Beasley H."/>
            <person name="Bray-Allen S."/>
            <person name="Brown A.J."/>
            <person name="Brown J.Y."/>
            <person name="Burford D.C."/>
            <person name="Burrill W."/>
            <person name="Burton J."/>
            <person name="Cahill P."/>
            <person name="Camire D."/>
            <person name="Carter N.P."/>
            <person name="Chapman J.C."/>
            <person name="Clark S.Y."/>
            <person name="Clarke G."/>
            <person name="Clee C.M."/>
            <person name="Clegg S."/>
            <person name="Corby N."/>
            <person name="Coulson A."/>
            <person name="Dhami P."/>
            <person name="Dutta I."/>
            <person name="Dunn M."/>
            <person name="Faulkner L."/>
            <person name="Frankish A."/>
            <person name="Frankland J.A."/>
            <person name="Garner P."/>
            <person name="Garnett J."/>
            <person name="Gribble S."/>
            <person name="Griffiths C."/>
            <person name="Grocock R."/>
            <person name="Gustafson E."/>
            <person name="Hammond S."/>
            <person name="Harley J.L."/>
            <person name="Hart E."/>
            <person name="Heath P.D."/>
            <person name="Ho T.P."/>
            <person name="Hopkins B."/>
            <person name="Horne J."/>
            <person name="Howden P.J."/>
            <person name="Huckle E."/>
            <person name="Hynds C."/>
            <person name="Johnson C."/>
            <person name="Johnson D."/>
            <person name="Kana A."/>
            <person name="Kay M."/>
            <person name="Kimberley A.M."/>
            <person name="Kershaw J.K."/>
            <person name="Kokkinaki M."/>
            <person name="Laird G.K."/>
            <person name="Lawlor S."/>
            <person name="Lee H.M."/>
            <person name="Leongamornlert D.A."/>
            <person name="Laird G."/>
            <person name="Lloyd C."/>
            <person name="Lloyd D.M."/>
            <person name="Loveland J."/>
            <person name="Lovell J."/>
            <person name="McLaren S."/>
            <person name="McLay K.E."/>
            <person name="McMurray A."/>
            <person name="Mashreghi-Mohammadi M."/>
            <person name="Matthews L."/>
            <person name="Milne S."/>
            <person name="Nickerson T."/>
            <person name="Nguyen M."/>
            <person name="Overton-Larty E."/>
            <person name="Palmer S.A."/>
            <person name="Pearce A.V."/>
            <person name="Peck A.I."/>
            <person name="Pelan S."/>
            <person name="Phillimore B."/>
            <person name="Porter K."/>
            <person name="Rice C.M."/>
            <person name="Rogosin A."/>
            <person name="Ross M.T."/>
            <person name="Sarafidou T."/>
            <person name="Sehra H.K."/>
            <person name="Shownkeen R."/>
            <person name="Skuce C.D."/>
            <person name="Smith M."/>
            <person name="Standring L."/>
            <person name="Sycamore N."/>
            <person name="Tester J."/>
            <person name="Thorpe A."/>
            <person name="Torcasso W."/>
            <person name="Tracey A."/>
            <person name="Tromans A."/>
            <person name="Tsolas J."/>
            <person name="Wall M."/>
            <person name="Walsh J."/>
            <person name="Wang H."/>
            <person name="Weinstock K."/>
            <person name="West A.P."/>
            <person name="Willey D.L."/>
            <person name="Whitehead S.L."/>
            <person name="Wilming L."/>
            <person name="Wray P.W."/>
            <person name="Young L."/>
            <person name="Chen Y."/>
            <person name="Lovering R.C."/>
            <person name="Moschonas N.K."/>
            <person name="Siebert R."/>
            <person name="Fechtel K."/>
            <person name="Bentley D."/>
            <person name="Durbin R.M."/>
            <person name="Hubbard T."/>
            <person name="Doucette-Stamm L."/>
            <person name="Beck S."/>
            <person name="Smith D.R."/>
            <person name="Rogers J."/>
        </authorList>
    </citation>
    <scope>NUCLEOTIDE SEQUENCE [LARGE SCALE GENOMIC DNA]</scope>
</reference>
<reference key="5">
    <citation type="journal article" date="2004" name="Genome Res.">
        <title>The status, quality, and expansion of the NIH full-length cDNA project: the Mammalian Gene Collection (MGC).</title>
        <authorList>
            <consortium name="The MGC Project Team"/>
        </authorList>
    </citation>
    <scope>NUCLEOTIDE SEQUENCE [LARGE SCALE MRNA]</scope>
    <scope>VARIANT VAL-283</scope>
</reference>
<reference key="6">
    <citation type="journal article" date="1999" name="Regul. Pept.">
        <title>Tissue distribution of prolactin-releasing peptide (PrRP) and its receptor.</title>
        <authorList>
            <person name="Fujii R."/>
            <person name="Fukusumi S."/>
            <person name="Hosoya M."/>
            <person name="Kawamata Y."/>
            <person name="Habata Y."/>
            <person name="Hinuma S."/>
            <person name="Sekiguchi M."/>
            <person name="Kitada C."/>
            <person name="Kurokawa T."/>
            <person name="Nishimura O."/>
            <person name="Onda H."/>
            <person name="Sumino Y."/>
            <person name="Fujino M."/>
        </authorList>
    </citation>
    <scope>TISSUE SPECIFICITY</scope>
</reference>
<reference key="7">
    <citation type="journal article" date="2001" name="Mol. Pharmacol.">
        <title>The carboxyl terminus of the prolactin-releasing peptide receptor interacts with PDZ domain proteins involved in alpha-amino-3-hydroxy-5-methylisoxazole-4-propionic acid receptor clustering.</title>
        <authorList>
            <person name="Lin S.H.S."/>
            <person name="Arai A.C."/>
            <person name="Wang Z."/>
            <person name="Nothacker H.-P."/>
            <person name="Civelli O."/>
        </authorList>
    </citation>
    <scope>INTERACTION WITH GRIP1; GRIP2 AND PICK1</scope>
    <scope>MUTAGENESIS OF THR-365; VAL-366; SER-367; VAL-368; VAL-369 AND ILE-370</scope>
</reference>
<name>PRLHR_HUMAN</name>
<sequence length="370" mass="41121">MASSTTRGPRVSDLFSGLPPAVTTPANQSAEASAGNGSVAGADAPAVTPFQSLQLVHQLKGLIVLLYSVVVVVGLVGNCLLVLVIARVRRLHNVTNFLIGNLALSDVLMCTACVPLTLAYAFEPRGWVFGGGLCHLVFFLQPVTVYVSVFTLTTIAVDRYVVLVHPLRRRISLRLSAYAVLAIWALSAVLALPAAVHTYHVELKPHDVRLCEEFWGSQERQRQLYAWGLLLVTYLLPLLVILLSYVRVSVKLRNRVVPGCVTQSQADWDRARRRRTFCLLVVIVVVFAVCWLPLHVFNLLRDLDPHAIDPYAFGLVQLLCHWLAMSSACYNPFIYAWLHDSFREELRKLLVAWPRKIAPHGQNMTVSVVI</sequence>
<protein>
    <recommendedName>
        <fullName>Prolactin-releasing peptide receptor</fullName>
        <shortName>PrRP receptor</shortName>
        <shortName>PrRPR</shortName>
    </recommendedName>
    <alternativeName>
        <fullName>G-protein coupled receptor 10</fullName>
    </alternativeName>
    <alternativeName>
        <fullName>hGR3</fullName>
    </alternativeName>
</protein>
<gene>
    <name type="primary">PRLHR</name>
    <name type="synonym">GPR10</name>
    <name type="synonym">GR3</name>
</gene>
<feature type="chain" id="PRO_0000069524" description="Prolactin-releasing peptide receptor">
    <location>
        <begin position="1"/>
        <end position="370"/>
    </location>
</feature>
<feature type="topological domain" description="Extracellular" evidence="1">
    <location>
        <begin position="1"/>
        <end position="62"/>
    </location>
</feature>
<feature type="transmembrane region" description="Helical; Name=1" evidence="1">
    <location>
        <begin position="63"/>
        <end position="83"/>
    </location>
</feature>
<feature type="topological domain" description="Cytoplasmic" evidence="1">
    <location>
        <begin position="84"/>
        <end position="101"/>
    </location>
</feature>
<feature type="transmembrane region" description="Helical; Name=2" evidence="1">
    <location>
        <begin position="102"/>
        <end position="122"/>
    </location>
</feature>
<feature type="topological domain" description="Extracellular" evidence="1">
    <location>
        <begin position="123"/>
        <end position="126"/>
    </location>
</feature>
<feature type="transmembrane region" description="Helical; Name=3" evidence="1">
    <location>
        <begin position="127"/>
        <end position="147"/>
    </location>
</feature>
<feature type="topological domain" description="Cytoplasmic" evidence="1">
    <location>
        <begin position="148"/>
        <end position="175"/>
    </location>
</feature>
<feature type="transmembrane region" description="Helical; Name=4" evidence="1">
    <location>
        <begin position="176"/>
        <end position="196"/>
    </location>
</feature>
<feature type="topological domain" description="Extracellular" evidence="1">
    <location>
        <begin position="197"/>
        <end position="225"/>
    </location>
</feature>
<feature type="transmembrane region" description="Helical; Name=5" evidence="1">
    <location>
        <begin position="226"/>
        <end position="246"/>
    </location>
</feature>
<feature type="topological domain" description="Cytoplasmic" evidence="1">
    <location>
        <begin position="247"/>
        <end position="276"/>
    </location>
</feature>
<feature type="transmembrane region" description="Helical; Name=6" evidence="1">
    <location>
        <begin position="277"/>
        <end position="297"/>
    </location>
</feature>
<feature type="topological domain" description="Extracellular" evidence="1">
    <location>
        <begin position="298"/>
        <end position="317"/>
    </location>
</feature>
<feature type="transmembrane region" description="Helical; Name=7" evidence="1">
    <location>
        <begin position="318"/>
        <end position="338"/>
    </location>
</feature>
<feature type="topological domain" description="Cytoplasmic" evidence="1">
    <location>
        <begin position="339"/>
        <end position="369"/>
    </location>
</feature>
<feature type="region of interest" description="Required for interaction with GRIP1, GRIP2 and PICK1" evidence="4">
    <location>
        <begin position="365"/>
        <end position="370"/>
    </location>
</feature>
<feature type="glycosylation site" description="N-linked (GlcNAc...) asparagine" evidence="1">
    <location>
        <position position="27"/>
    </location>
</feature>
<feature type="glycosylation site" description="N-linked (GlcNAc...) asparagine" evidence="1">
    <location>
        <position position="36"/>
    </location>
</feature>
<feature type="disulfide bond" evidence="2">
    <location>
        <begin position="134"/>
        <end position="211"/>
    </location>
</feature>
<feature type="sequence variant" id="VAR_023948" description="In dbSNP:rs1613448." evidence="5 6 7 8">
    <original>I</original>
    <variation>V</variation>
    <location>
        <position position="283"/>
    </location>
</feature>
<feature type="sequence variant" id="VAR_029746" description="In dbSNP:rs8192523.">
    <original>D</original>
    <variation>G</variation>
    <location>
        <position position="302"/>
    </location>
</feature>
<feature type="mutagenesis site" description="Abolishes binding to GRIP1 and PICK1.">
    <location>
        <begin position="365"/>
        <end position="370"/>
    </location>
</feature>
<feature type="mutagenesis site" description="No effect on binding to GRIP1." evidence="4">
    <original>T</original>
    <variation>A</variation>
    <location>
        <position position="365"/>
    </location>
</feature>
<feature type="mutagenesis site" description="No effect on binding to GRIP1." evidence="4">
    <original>V</original>
    <variation>A</variation>
    <location>
        <position position="366"/>
    </location>
</feature>
<feature type="mutagenesis site" description="Abolishes binding to GRIP1." evidence="4">
    <original>S</original>
    <variation>A</variation>
    <location>
        <position position="367"/>
    </location>
</feature>
<feature type="mutagenesis site" description="Abolishes binding to GRIP1." evidence="4">
    <original>V</original>
    <variation>A</variation>
    <location>
        <position position="368"/>
    </location>
</feature>
<feature type="mutagenesis site" description="No effect on binding to GRIP1." evidence="4">
    <original>V</original>
    <variation>A</variation>
    <location>
        <position position="369"/>
    </location>
</feature>
<feature type="mutagenesis site" description="Abolishes binding to GRIP1." evidence="4">
    <original>I</original>
    <variation>A</variation>
    <location>
        <position position="370"/>
    </location>
</feature>
<feature type="sequence conflict" description="In Ref. 1; AAC50504." evidence="9" ref="1">
    <original>R</original>
    <variation>P</variation>
    <location>
        <position position="89"/>
    </location>
</feature>
<feature type="sequence conflict" description="In Ref. 1; AAC50504." evidence="9" ref="1">
    <original>A</original>
    <variation>P</variation>
    <location>
        <position position="194"/>
    </location>
</feature>
<feature type="helix" evidence="10">
    <location>
        <begin position="60"/>
        <end position="87"/>
    </location>
</feature>
<feature type="helix" evidence="10">
    <location>
        <begin position="89"/>
        <end position="91"/>
    </location>
</feature>
<feature type="helix" evidence="10">
    <location>
        <begin position="94"/>
        <end position="122"/>
    </location>
</feature>
<feature type="helix" evidence="10">
    <location>
        <begin position="133"/>
        <end position="163"/>
    </location>
</feature>
<feature type="strand" evidence="10">
    <location>
        <begin position="164"/>
        <end position="168"/>
    </location>
</feature>
<feature type="helix" evidence="10">
    <location>
        <begin position="173"/>
        <end position="197"/>
    </location>
</feature>
<feature type="strand" evidence="10">
    <location>
        <begin position="199"/>
        <end position="201"/>
    </location>
</feature>
<feature type="strand" evidence="10">
    <location>
        <begin position="204"/>
        <end position="207"/>
    </location>
</feature>
<feature type="strand" evidence="10">
    <location>
        <begin position="210"/>
        <end position="212"/>
    </location>
</feature>
<feature type="turn" evidence="10">
    <location>
        <begin position="218"/>
        <end position="220"/>
    </location>
</feature>
<feature type="helix" evidence="10">
    <location>
        <begin position="221"/>
        <end position="254"/>
    </location>
</feature>
<feature type="helix" evidence="10">
    <location>
        <begin position="267"/>
        <end position="303"/>
    </location>
</feature>
<feature type="helix" evidence="10">
    <location>
        <begin position="310"/>
        <end position="335"/>
    </location>
</feature>
<feature type="turn" evidence="10">
    <location>
        <begin position="336"/>
        <end position="338"/>
    </location>
</feature>
<feature type="helix" evidence="10">
    <location>
        <begin position="340"/>
        <end position="350"/>
    </location>
</feature>
<evidence type="ECO:0000255" key="1"/>
<evidence type="ECO:0000255" key="2">
    <source>
        <dbReference type="PROSITE-ProRule" id="PRU00521"/>
    </source>
</evidence>
<evidence type="ECO:0000269" key="3">
    <source>
    </source>
</evidence>
<evidence type="ECO:0000269" key="4">
    <source>
    </source>
</evidence>
<evidence type="ECO:0000269" key="5">
    <source>
    </source>
</evidence>
<evidence type="ECO:0000269" key="6">
    <source>
    </source>
</evidence>
<evidence type="ECO:0000269" key="7">
    <source>
    </source>
</evidence>
<evidence type="ECO:0000269" key="8">
    <source>
    </source>
</evidence>
<evidence type="ECO:0000305" key="9"/>
<evidence type="ECO:0007829" key="10">
    <source>
        <dbReference type="PDB" id="8ZPT"/>
    </source>
</evidence>
<comment type="function">
    <text>Receptor for prolactin-releasing peptide (PrRP). Implicated in lactation, regulation of food intake and pain-signal processing.</text>
</comment>
<comment type="subunit">
    <text evidence="4">Interacts through its C-terminal region with the PDZ domain-containing proteins GRIP1, GRIP2 and PICK1. Interacts with PDZ domains 4 and 5 of GRIP1 and with the PDZ domain of PICK1.</text>
</comment>
<comment type="interaction">
    <interactant intactId="EBI-8009236">
        <id>P49683</id>
    </interactant>
    <interactant intactId="EBI-5349621">
        <id>Q9Y3R0</id>
        <label>GRIP1</label>
    </interactant>
    <organismsDiffer>false</organismsDiffer>
    <experiments>2</experiments>
</comment>
<comment type="subcellular location">
    <subcellularLocation>
        <location>Cell membrane</location>
        <topology>Multi-pass membrane protein</topology>
    </subcellularLocation>
</comment>
<comment type="tissue specificity">
    <text evidence="3 5">Only detected in the pituitary gland and in all cell types of pituitary adenomas.</text>
</comment>
<comment type="induction">
    <text evidence="5">Repressed by bromocriptine, a dopamine agonist.</text>
</comment>
<comment type="similarity">
    <text evidence="2">Belongs to the G-protein coupled receptor 1 family.</text>
</comment>
<comment type="sequence caution" evidence="9">
    <conflict type="frameshift">
        <sequence resource="EMBL-CDS" id="AAC50504"/>
    </conflict>
</comment>
<accession>P49683</accession>
<accession>O75194</accession>
<accession>Q502U8</accession>
<accession>Q5VXR9</accession>